<accession>Q9UBK5</accession>
<accession>Q9UBS1</accession>
<accession>Q9Y3Y0</accession>
<organism>
    <name type="scientific">Homo sapiens</name>
    <name type="common">Human</name>
    <dbReference type="NCBI Taxonomy" id="9606"/>
    <lineage>
        <taxon>Eukaryota</taxon>
        <taxon>Metazoa</taxon>
        <taxon>Chordata</taxon>
        <taxon>Craniata</taxon>
        <taxon>Vertebrata</taxon>
        <taxon>Euteleostomi</taxon>
        <taxon>Mammalia</taxon>
        <taxon>Eutheria</taxon>
        <taxon>Euarchontoglires</taxon>
        <taxon>Primates</taxon>
        <taxon>Haplorrhini</taxon>
        <taxon>Catarrhini</taxon>
        <taxon>Hominidae</taxon>
        <taxon>Homo</taxon>
    </lineage>
</organism>
<keyword id="KW-0025">Alternative splicing</keyword>
<keyword id="KW-1015">Disulfide bond</keyword>
<keyword id="KW-0325">Glycoprotein</keyword>
<keyword id="KW-0472">Membrane</keyword>
<keyword id="KW-0597">Phosphoprotein</keyword>
<keyword id="KW-1267">Proteomics identification</keyword>
<keyword id="KW-1185">Reference proteome</keyword>
<keyword id="KW-0732">Signal</keyword>
<keyword id="KW-0812">Transmembrane</keyword>
<keyword id="KW-1133">Transmembrane helix</keyword>
<reference key="1">
    <citation type="journal article" date="1999" name="J. Immunol.">
        <title>KAP10, a novel transmembrane adapter protein genetically linked to DAP12 but with unique signaling properties.</title>
        <authorList>
            <person name="Chang C."/>
            <person name="Dietrich J."/>
            <person name="Harpur A.G."/>
            <person name="Lindquist J.A."/>
            <person name="Haude A."/>
            <person name="Loke Y.W."/>
            <person name="King A."/>
            <person name="Colonna M."/>
            <person name="Trowsdale J."/>
            <person name="Wilson M.J."/>
        </authorList>
    </citation>
    <scope>NUCLEOTIDE SEQUENCE [MRNA] (ISOFORM 1)</scope>
    <scope>FUNCTION</scope>
    <scope>TISSUE SPECIFICITY</scope>
    <scope>INTERACTION WITH PIK3R1 AND GRB2</scope>
    <scope>PHOSPHORYLATION</scope>
</reference>
<reference key="2">
    <citation type="journal article" date="1999" name="Science">
        <title>An activating immunoreceptor complex formed by NKG2D and DAP10.</title>
        <authorList>
            <person name="Wu J."/>
            <person name="Song Y."/>
            <person name="Bakker A.B.H."/>
            <person name="Bauer S."/>
            <person name="Spies T."/>
            <person name="Lanier L.L."/>
            <person name="Phillips J.H."/>
        </authorList>
    </citation>
    <scope>NUCLEOTIDE SEQUENCE [MRNA] (ISOFORMS 1 AND 2)</scope>
    <scope>FUNCTION</scope>
    <scope>INTERACTION WITH KLRK1 AND PIK3R1</scope>
    <scope>GLYCOSYLATION</scope>
    <scope>SUBCELLULAR LOCATION</scope>
    <scope>PHOSPHORYLATION</scope>
    <scope>MUTAGENESIS OF ASP-57</scope>
</reference>
<reference key="3">
    <citation type="journal article" date="2001" name="Immunogenetics">
        <title>Molecular cloning and characterization of pig immunoreceptor DAP10 and NKG2D.</title>
        <authorList>
            <person name="Yim D."/>
            <person name="Jie H.-B."/>
            <person name="Sotiriadis J."/>
            <person name="Kim Y.-S."/>
            <person name="Kim K.-S."/>
            <person name="Rothschild M.F."/>
            <person name="Lanier L.L."/>
            <person name="Kim Y.B."/>
        </authorList>
    </citation>
    <scope>NUCLEOTIDE SEQUENCE [GENOMIC DNA / MRNA] (ISOFORM 1)</scope>
</reference>
<reference key="4">
    <citation type="journal article" date="2003" name="Genome Res.">
        <title>The secreted protein discovery initiative (SPDI), a large-scale effort to identify novel human secreted and transmembrane proteins: a bioinformatics assessment.</title>
        <authorList>
            <person name="Clark H.F."/>
            <person name="Gurney A.L."/>
            <person name="Abaya E."/>
            <person name="Baker K."/>
            <person name="Baldwin D.T."/>
            <person name="Brush J."/>
            <person name="Chen J."/>
            <person name="Chow B."/>
            <person name="Chui C."/>
            <person name="Crowley C."/>
            <person name="Currell B."/>
            <person name="Deuel B."/>
            <person name="Dowd P."/>
            <person name="Eaton D."/>
            <person name="Foster J.S."/>
            <person name="Grimaldi C."/>
            <person name="Gu Q."/>
            <person name="Hass P.E."/>
            <person name="Heldens S."/>
            <person name="Huang A."/>
            <person name="Kim H.S."/>
            <person name="Klimowski L."/>
            <person name="Jin Y."/>
            <person name="Johnson S."/>
            <person name="Lee J."/>
            <person name="Lewis L."/>
            <person name="Liao D."/>
            <person name="Mark M.R."/>
            <person name="Robbie E."/>
            <person name="Sanchez C."/>
            <person name="Schoenfeld J."/>
            <person name="Seshagiri S."/>
            <person name="Simmons L."/>
            <person name="Singh J."/>
            <person name="Smith V."/>
            <person name="Stinson J."/>
            <person name="Vagts A."/>
            <person name="Vandlen R.L."/>
            <person name="Watanabe C."/>
            <person name="Wieand D."/>
            <person name="Woods K."/>
            <person name="Xie M.-H."/>
            <person name="Yansura D.G."/>
            <person name="Yi S."/>
            <person name="Yu G."/>
            <person name="Yuan J."/>
            <person name="Zhang M."/>
            <person name="Zhang Z."/>
            <person name="Goddard A.D."/>
            <person name="Wood W.I."/>
            <person name="Godowski P.J."/>
            <person name="Gray A.M."/>
        </authorList>
    </citation>
    <scope>NUCLEOTIDE SEQUENCE [LARGE SCALE MRNA] (ISOFORM 2)</scope>
</reference>
<reference key="5">
    <citation type="journal article" date="2007" name="BMC Genomics">
        <title>The full-ORF clone resource of the German cDNA consortium.</title>
        <authorList>
            <person name="Bechtel S."/>
            <person name="Rosenfelder H."/>
            <person name="Duda A."/>
            <person name="Schmidt C.P."/>
            <person name="Ernst U."/>
            <person name="Wellenreuther R."/>
            <person name="Mehrle A."/>
            <person name="Schuster C."/>
            <person name="Bahr A."/>
            <person name="Bloecker H."/>
            <person name="Heubner D."/>
            <person name="Hoerlein A."/>
            <person name="Michel G."/>
            <person name="Wedler H."/>
            <person name="Koehrer K."/>
            <person name="Ottenwaelder B."/>
            <person name="Poustka A."/>
            <person name="Wiemann S."/>
            <person name="Schupp I."/>
        </authorList>
    </citation>
    <scope>NUCLEOTIDE SEQUENCE [LARGE SCALE MRNA] (ISOFORM 1)</scope>
    <source>
        <tissue>Uterus</tissue>
    </source>
</reference>
<reference key="6">
    <citation type="journal article" date="2004" name="Genome Res.">
        <title>The status, quality, and expansion of the NIH full-length cDNA project: the Mammalian Gene Collection (MGC).</title>
        <authorList>
            <consortium name="The MGC Project Team"/>
        </authorList>
    </citation>
    <scope>NUCLEOTIDE SEQUENCE [LARGE SCALE MRNA] (ISOFORM 1)</scope>
    <source>
        <tissue>Lung</tissue>
        <tissue>Pancreas</tissue>
    </source>
</reference>
<reference key="7">
    <citation type="journal article" date="2000" name="J. Exp. Med.">
        <title>DAP10 and DAP12 form distinct, but functionally cooperative, receptor complexes in natural killer cells.</title>
        <authorList>
            <person name="Wu J."/>
            <person name="Cherwinski H."/>
            <person name="Spies T."/>
            <person name="Phillips J.H."/>
            <person name="Lanier L.L."/>
        </authorList>
    </citation>
    <scope>FUNCTION</scope>
    <scope>INTERACTION WITH KLRK1</scope>
</reference>
<reference key="8">
    <citation type="journal article" date="2002" name="J. Immunol.">
        <title>UL16-binding proteins, novel MHC class I-related proteins, bind to NKG2D and activate multiple signaling pathways in primary NK cells.</title>
        <authorList>
            <person name="Sutherland C.L."/>
            <person name="Chalupny N.J."/>
            <person name="Schooley K."/>
            <person name="VandenBos T."/>
            <person name="Kubin M."/>
            <person name="Cosman D."/>
        </authorList>
    </citation>
    <scope>FUNCTION</scope>
</reference>
<reference key="9">
    <citation type="journal article" date="2003" name="Nat. Immunol.">
        <title>NKG2D-DAP10 triggers human NK cell-mediated killing via a Syk-independent regulatory pathway.</title>
        <authorList>
            <person name="Billadeau D.D."/>
            <person name="Upshaw J.L."/>
            <person name="Schoon R.A."/>
            <person name="Dick C.J."/>
            <person name="Leibson P.J."/>
        </authorList>
    </citation>
    <scope>FUNCTION</scope>
</reference>
<reference key="10">
    <citation type="journal article" date="2003" name="Nat. Immunol.">
        <title>NKG2D triggers cytotoxicity in mouse NK cells lacking DAP12 or Syk family kinases.</title>
        <authorList>
            <person name="Zompi S."/>
            <person name="Hamerman J.A."/>
            <person name="Ogasawara K."/>
            <person name="Schweighoffer E."/>
            <person name="Tybulewicz V.L.J."/>
            <person name="Di Santo J.P."/>
            <person name="Lanier L.L."/>
            <person name="Colucci F."/>
        </authorList>
    </citation>
    <scope>FUNCTION</scope>
</reference>
<reference key="11">
    <citation type="journal article" date="2004" name="J. Immunol.">
        <title>A Structural basis for the association of DAP12 with mouse, but not human, NKG2D.</title>
        <authorList>
            <person name="Rosen D.B."/>
            <person name="Araki M."/>
            <person name="Hamerman J.A."/>
            <person name="Chen T."/>
            <person name="Yamamura T."/>
            <person name="Lanier L.L."/>
        </authorList>
    </citation>
    <scope>INTERACTION WITH KLRK1</scope>
</reference>
<reference key="12">
    <citation type="journal article" date="2005" name="J. Immunol.">
        <title>Systemic NKG2D down-regulation impairs NK and CD8 T cell responses in vivo.</title>
        <authorList>
            <person name="Wiemann K."/>
            <person name="Mittruecker H.-W."/>
            <person name="Feger U."/>
            <person name="Welte S.A."/>
            <person name="Yokoyama W.M."/>
            <person name="Spies T."/>
            <person name="Rammensee H.-G."/>
            <person name="Steinle A."/>
        </authorList>
    </citation>
    <scope>FUNCTION</scope>
</reference>
<reference key="13">
    <citation type="journal article" date="2005" name="J. Immunol.">
        <title>Silencing human NKG2D, DAP10, and DAP12 reduces cytotoxicity of activated CD8+ T cells and NK cells.</title>
        <authorList>
            <person name="Karimi M."/>
            <person name="Cao T.M."/>
            <person name="Baker J.A."/>
            <person name="Verneris M.R."/>
            <person name="Soares L."/>
            <person name="Negrin R.S."/>
        </authorList>
    </citation>
    <scope>FUNCTION</scope>
</reference>
<reference key="14">
    <citation type="journal article" date="2005" name="Proc. Natl. Acad. Sci. U.S.A.">
        <title>The activating NKG2D receptor assembles in the membrane with two signaling dimers into a hexameric structure.</title>
        <authorList>
            <person name="Garrity D."/>
            <person name="Call M.E."/>
            <person name="Feng J."/>
            <person name="Wucherpfennig K.W."/>
        </authorList>
    </citation>
    <scope>SUBUNIT</scope>
</reference>
<reference key="15">
    <citation type="journal article" date="2006" name="J. Immunol.">
        <title>IL-21 down-regulates NKG2D/DAP10 expression on human NK and CD8+ T cells.</title>
        <authorList>
            <person name="Burgess S.J."/>
            <person name="Marusina A.I."/>
            <person name="Pathmanathan I."/>
            <person name="Borrego F."/>
            <person name="Coligan J.E."/>
        </authorList>
    </citation>
    <scope>INDUCTION</scope>
</reference>
<reference key="16">
    <citation type="journal article" date="2006" name="Nat. Immunol.">
        <title>NKG2D-mediated signaling requires a DAP10-bound Grb2-Vav1 intermediate and phosphatidylinositol-3-kinase in human natural killer cells.</title>
        <authorList>
            <person name="Upshaw J.L."/>
            <person name="Arneson L.N."/>
            <person name="Schoon R.A."/>
            <person name="Dick C.J."/>
            <person name="Billadeau D.D."/>
            <person name="Leibson P.J."/>
        </authorList>
    </citation>
    <scope>FUNCTION</scope>
    <scope>INTERACTION WITH GRB2-VAV1 AND PIK3R1</scope>
    <scope>PHOSPHORYLATION AT TYR-86</scope>
    <scope>MUTAGENESIS OF ASN-88 AND MET-89</scope>
</reference>
<reference key="17">
    <citation type="journal article" date="2008" name="J. Immunol.">
        <title>Regulation of human DAP10 gene expression in NK and T cells by Ap-1 transcription factors.</title>
        <authorList>
            <person name="Marusina A.I."/>
            <person name="Burgess S.J."/>
            <person name="Pathmanathan I."/>
            <person name="Borrego F."/>
            <person name="Coligan J.E."/>
        </authorList>
    </citation>
    <scope>FUNCTION</scope>
    <scope>INDUCTION</scope>
</reference>
<reference key="18">
    <citation type="journal article" date="2015" name="J. Biol. Chem.">
        <title>Identification and Characterization of CD300H, a New Member of the Human CD300 Immunoreceptor Family.</title>
        <authorList>
            <person name="Niizuma K."/>
            <person name="Tahara-Hanaoka S."/>
            <person name="Noguchi E."/>
            <person name="Shibuya A."/>
        </authorList>
    </citation>
    <scope>INTERACTION WITH CD300H</scope>
</reference>
<sequence length="93" mass="9489">MIHLGHILFLLLLPVAAAQTTPGERSSLPAFYPGTSGSCSGCGSLSLPLLAGLVAADAVASLLIVGAVFLCARPRRSPAQEDGKVYINMPGRG</sequence>
<evidence type="ECO:0000250" key="1"/>
<evidence type="ECO:0000255" key="2"/>
<evidence type="ECO:0000269" key="3">
    <source>
    </source>
</evidence>
<evidence type="ECO:0000269" key="4">
    <source>
    </source>
</evidence>
<evidence type="ECO:0000269" key="5">
    <source>
    </source>
</evidence>
<evidence type="ECO:0000269" key="6">
    <source>
    </source>
</evidence>
<evidence type="ECO:0000269" key="7">
    <source>
    </source>
</evidence>
<evidence type="ECO:0000269" key="8">
    <source>
    </source>
</evidence>
<evidence type="ECO:0000269" key="9">
    <source>
    </source>
</evidence>
<evidence type="ECO:0000269" key="10">
    <source>
    </source>
</evidence>
<evidence type="ECO:0000269" key="11">
    <source>
    </source>
</evidence>
<evidence type="ECO:0000269" key="12">
    <source>
    </source>
</evidence>
<evidence type="ECO:0000269" key="13">
    <source>
    </source>
</evidence>
<evidence type="ECO:0000269" key="14">
    <source>
    </source>
</evidence>
<evidence type="ECO:0000269" key="15">
    <source>
    </source>
</evidence>
<evidence type="ECO:0000269" key="16">
    <source>
    </source>
</evidence>
<evidence type="ECO:0000303" key="17">
    <source>
    </source>
</evidence>
<evidence type="ECO:0000303" key="18">
    <source>
    </source>
</evidence>
<evidence type="ECO:0000305" key="19"/>
<gene>
    <name type="primary">HCST</name>
    <name type="synonym">DAP10</name>
    <name type="synonym">KAP10</name>
    <name type="synonym">PIK3AP</name>
    <name type="ORF">UNQ587/PRO1157</name>
</gene>
<comment type="function">
    <text evidence="3 4 5 6 7 8 11 12 14 15">Transmembrane adapter protein which associates with KLRK1 to form an activation receptor KLRK1-HCST in lymphoid and myeloid cells; this receptor plays a major role in triggering cytotoxicity against target cells expressing cell surface ligands such as MHC class I chain-related MICA and MICB, and UL16-binding proteins (ULBPs); these ligands are up-regulated by stress conditions and pathological state such as viral infection and tumor transformation. Functions as a docking site for PI3-kinase PIK3R1 and GRB2. Interaction of ULBPs with KLRK1-HCST triggers calcium mobilization and activation of the PIK3R1, MAP2K/ERK, and JAK2/STAT5 signaling pathways. Both PIK3R1 and GRB2 are required for full KLRK1-HCST-mediated activation and ultimate killing of target cells. In NK cells, KLRK1-HCST signaling directly induces cytotoxicity and enhances cytokine production initiated via DAP12/TYROBP-associated receptors. In T-cells, it provides primarily costimulation for TCR-induced signals. KLRK1-HCST receptor plays a role in immune surveillance against tumors and is required for cytolysis of tumors cells; indeed, melanoma cells that do not express KLRK1 ligands escape from immune surveillance mediated by NK cells.</text>
</comment>
<comment type="subunit">
    <text evidence="1 3 4 5 9 10 14 16">Interacts with CLEC5A (By similarity). Forms an CLEC5A/TYROBP/HCST trimolecular complex depending almost solely on TYROBP (By similarity). Homodimer; Disulfide-linked. Heterohexamer composed of four subunits of HCST/DAP10 and two subunits of KLRK1. Interacts (via transmembrane domain) with KLRK1 (via transmembrane domain); the interaction is required for KLRK1 NK cell surface and induces NK cell-mediated cytotoxicity. Interacts with PIK3R1 and GRB2. Interacts with CD300H (PubMed:26221034).</text>
</comment>
<comment type="interaction">
    <interactant intactId="EBI-2801937">
        <id>Q9UBK5</id>
    </interactant>
    <interactant intactId="EBI-12275524">
        <id>P23560-2</id>
        <label>BDNF</label>
    </interactant>
    <organismsDiffer>false</organismsDiffer>
    <experiments>3</experiments>
</comment>
<comment type="interaction">
    <interactant intactId="EBI-2801937">
        <id>Q9UBK5</id>
    </interactant>
    <interactant intactId="EBI-8652744">
        <id>Q96IW7</id>
        <label>SEC22A</label>
    </interactant>
    <organismsDiffer>false</organismsDiffer>
    <experiments>3</experiments>
</comment>
<comment type="interaction">
    <interactant intactId="EBI-2801937">
        <id>Q9UBK5</id>
    </interactant>
    <interactant intactId="EBI-3916943">
        <id>O95772</id>
        <label>STARD3NL</label>
    </interactant>
    <organismsDiffer>false</organismsDiffer>
    <experiments>3</experiments>
</comment>
<comment type="interaction">
    <interactant intactId="EBI-2801937">
        <id>Q9UBK5</id>
    </interactant>
    <interactant intactId="EBI-12190699">
        <id>Q6UX27-3</id>
        <label>VSTM1</label>
    </interactant>
    <organismsDiffer>false</organismsDiffer>
    <experiments>3</experiments>
</comment>
<comment type="subcellular location">
    <subcellularLocation>
        <location evidence="3">Membrane</location>
        <topology evidence="3">Single-pass type I membrane protein</topology>
    </subcellularLocation>
</comment>
<comment type="alternative products">
    <event type="alternative splicing"/>
    <isoform>
        <id>Q9UBK5-1</id>
        <name>1</name>
        <sequence type="displayed"/>
    </isoform>
    <isoform>
        <id>Q9UBK5-2</id>
        <name>2</name>
        <sequence type="described" ref="VSP_033022"/>
    </isoform>
</comment>
<comment type="tissue specificity">
    <text evidence="4">Predominantly expressed in hemopoietic cells such as NK cells, subset of T-cells and monocytes. Detected in leukocytes, spleen, and thymus.</text>
</comment>
<comment type="induction">
    <text evidence="13 15">By T-cell receptor (TCR) ligation, which leads to enhanced KLRK1-HCST cell surface expression. Down-regulated by IL21/interleukin-21 in T-cells and NK cells.</text>
</comment>
<comment type="PTM">
    <text evidence="3 4 14">Phosphorylated; PIK3R1 and GRB2 associate specifically with tyrosine-phosphorylated HCST.</text>
</comment>
<comment type="PTM">
    <text evidence="3">O-glycosylated.</text>
</comment>
<comment type="miscellaneous">
    <text>Silencing of HCST suppresses cytolytic activity of T-cells and NK cells.</text>
</comment>
<comment type="similarity">
    <text evidence="19">Belongs to the DAP10 family.</text>
</comment>
<protein>
    <recommendedName>
        <fullName>Hematopoietic cell signal transducer</fullName>
    </recommendedName>
    <alternativeName>
        <fullName>DNAX-activation protein 10</fullName>
    </alternativeName>
    <alternativeName>
        <fullName>Membrane protein DAP10</fullName>
    </alternativeName>
    <alternativeName>
        <fullName>Transmembrane adapter protein KAP10</fullName>
    </alternativeName>
</protein>
<feature type="signal peptide" evidence="2">
    <location>
        <begin position="1"/>
        <end position="18"/>
    </location>
</feature>
<feature type="chain" id="PRO_0000330287" description="Hematopoietic cell signal transducer">
    <location>
        <begin position="19"/>
        <end position="93"/>
    </location>
</feature>
<feature type="topological domain" description="Extracellular" evidence="2">
    <location>
        <begin position="19"/>
        <end position="48"/>
    </location>
</feature>
<feature type="transmembrane region" description="Helical" evidence="2">
    <location>
        <begin position="49"/>
        <end position="69"/>
    </location>
</feature>
<feature type="topological domain" description="Cytoplasmic" evidence="2">
    <location>
        <begin position="70"/>
        <end position="93"/>
    </location>
</feature>
<feature type="region of interest" description="PIK3R1 binding site">
    <location>
        <begin position="86"/>
        <end position="89"/>
    </location>
</feature>
<feature type="region of interest" description="GRB2 binding site">
    <location>
        <begin position="86"/>
        <end position="88"/>
    </location>
</feature>
<feature type="modified residue" description="Phosphotyrosine" evidence="14">
    <location>
        <position position="86"/>
    </location>
</feature>
<feature type="splice variant" id="VSP_033022" description="In isoform 2." evidence="17 18">
    <location>
        <position position="81"/>
    </location>
</feature>
<feature type="mutagenesis site" description="Abolishes stable interaction with KLRK1." evidence="3">
    <original>D</original>
    <variation>A</variation>
    <location>
        <position position="57"/>
    </location>
</feature>
<feature type="mutagenesis site" description="Abrogates cell killing and interaction with GRB2. No effect on interaction with PIK3R1." evidence="14">
    <original>N</original>
    <variation>Q</variation>
    <location>
        <position position="88"/>
    </location>
</feature>
<feature type="mutagenesis site" description="Abrogates cell killing and interaction with PIK3R1. No effect on interaction with GRB2." evidence="14">
    <original>M</original>
    <variation>Q</variation>
    <location>
        <position position="89"/>
    </location>
</feature>
<proteinExistence type="evidence at protein level"/>
<name>HCST_HUMAN</name>
<dbReference type="EMBL" id="AF172929">
    <property type="protein sequence ID" value="AAD50293.1"/>
    <property type="molecule type" value="mRNA"/>
</dbReference>
<dbReference type="EMBL" id="AF072844">
    <property type="protein sequence ID" value="AAD46986.1"/>
    <property type="molecule type" value="mRNA"/>
</dbReference>
<dbReference type="EMBL" id="AF072845">
    <property type="protein sequence ID" value="AAD46987.1"/>
    <property type="molecule type" value="Genomic_DNA"/>
</dbReference>
<dbReference type="EMBL" id="AF122904">
    <property type="protein sequence ID" value="AAD47911.1"/>
    <property type="molecule type" value="mRNA"/>
</dbReference>
<dbReference type="EMBL" id="AF285447">
    <property type="protein sequence ID" value="AAG29425.1"/>
    <property type="molecule type" value="mRNA"/>
</dbReference>
<dbReference type="EMBL" id="AY359058">
    <property type="protein sequence ID" value="AAQ89417.1"/>
    <property type="molecule type" value="mRNA"/>
</dbReference>
<dbReference type="EMBL" id="AL050163">
    <property type="protein sequence ID" value="CAB43303.2"/>
    <property type="molecule type" value="mRNA"/>
</dbReference>
<dbReference type="EMBL" id="BC035931">
    <property type="protein sequence ID" value="AAH35931.1"/>
    <property type="molecule type" value="mRNA"/>
</dbReference>
<dbReference type="EMBL" id="BC046348">
    <property type="protein sequence ID" value="AAH46348.1"/>
    <property type="molecule type" value="mRNA"/>
</dbReference>
<dbReference type="EMBL" id="BC065224">
    <property type="protein sequence ID" value="AAH65224.1"/>
    <property type="molecule type" value="mRNA"/>
</dbReference>
<dbReference type="CCDS" id="CCDS32998.1">
    <molecule id="Q9UBK5-1"/>
</dbReference>
<dbReference type="CCDS" id="CCDS46057.1">
    <molecule id="Q9UBK5-2"/>
</dbReference>
<dbReference type="PIR" id="T08788">
    <property type="entry name" value="T08788"/>
</dbReference>
<dbReference type="RefSeq" id="NP_001007470.1">
    <molecule id="Q9UBK5-2"/>
    <property type="nucleotide sequence ID" value="NM_001007469.2"/>
</dbReference>
<dbReference type="RefSeq" id="NP_055081.1">
    <molecule id="Q9UBK5-1"/>
    <property type="nucleotide sequence ID" value="NM_014266.4"/>
</dbReference>
<dbReference type="SMR" id="Q9UBK5"/>
<dbReference type="BioGRID" id="116079">
    <property type="interactions" value="231"/>
</dbReference>
<dbReference type="CORUM" id="Q9UBK5"/>
<dbReference type="FunCoup" id="Q9UBK5">
    <property type="interactions" value="196"/>
</dbReference>
<dbReference type="IntAct" id="Q9UBK5">
    <property type="interactions" value="203"/>
</dbReference>
<dbReference type="STRING" id="9606.ENSP00000246551"/>
<dbReference type="iPTMnet" id="Q9UBK5"/>
<dbReference type="PhosphoSitePlus" id="Q9UBK5"/>
<dbReference type="BioMuta" id="HCST"/>
<dbReference type="DMDM" id="74734930"/>
<dbReference type="MassIVE" id="Q9UBK5"/>
<dbReference type="PaxDb" id="9606-ENSP00000246551"/>
<dbReference type="PeptideAtlas" id="Q9UBK5"/>
<dbReference type="ProteomicsDB" id="83979">
    <molecule id="Q9UBK5-1"/>
</dbReference>
<dbReference type="ProteomicsDB" id="83980">
    <molecule id="Q9UBK5-2"/>
</dbReference>
<dbReference type="Antibodypedia" id="29605">
    <property type="antibodies" value="155 antibodies from 21 providers"/>
</dbReference>
<dbReference type="DNASU" id="10870"/>
<dbReference type="Ensembl" id="ENST00000246551.9">
    <molecule id="Q9UBK5-1"/>
    <property type="protein sequence ID" value="ENSP00000246551.3"/>
    <property type="gene ID" value="ENSG00000126264.10"/>
</dbReference>
<dbReference type="Ensembl" id="ENST00000437550.2">
    <molecule id="Q9UBK5-2"/>
    <property type="protein sequence ID" value="ENSP00000400516.1"/>
    <property type="gene ID" value="ENSG00000126264.10"/>
</dbReference>
<dbReference type="GeneID" id="10870"/>
<dbReference type="KEGG" id="hsa:10870"/>
<dbReference type="MANE-Select" id="ENST00000246551.9">
    <property type="protein sequence ID" value="ENSP00000246551.3"/>
    <property type="RefSeq nucleotide sequence ID" value="NM_014266.4"/>
    <property type="RefSeq protein sequence ID" value="NP_055081.1"/>
</dbReference>
<dbReference type="UCSC" id="uc002ock.2">
    <molecule id="Q9UBK5-1"/>
    <property type="organism name" value="human"/>
</dbReference>
<dbReference type="AGR" id="HGNC:16977"/>
<dbReference type="CTD" id="10870"/>
<dbReference type="DisGeNET" id="10870"/>
<dbReference type="GeneCards" id="HCST"/>
<dbReference type="HGNC" id="HGNC:16977">
    <property type="gene designation" value="HCST"/>
</dbReference>
<dbReference type="HPA" id="ENSG00000126264">
    <property type="expression patterns" value="Tissue enhanced (bone marrow, lymphoid tissue)"/>
</dbReference>
<dbReference type="MIM" id="604089">
    <property type="type" value="gene"/>
</dbReference>
<dbReference type="neXtProt" id="NX_Q9UBK5"/>
<dbReference type="OpenTargets" id="ENSG00000126264"/>
<dbReference type="PharmGKB" id="PA134956649"/>
<dbReference type="VEuPathDB" id="HostDB:ENSG00000126264"/>
<dbReference type="eggNOG" id="ENOG502TKP3">
    <property type="taxonomic scope" value="Eukaryota"/>
</dbReference>
<dbReference type="GeneTree" id="ENSGT00390000012777"/>
<dbReference type="HOGENOM" id="CLU_196934_0_0_1"/>
<dbReference type="InParanoid" id="Q9UBK5"/>
<dbReference type="OMA" id="AQMTPGE"/>
<dbReference type="PAN-GO" id="Q9UBK5">
    <property type="GO annotations" value="3 GO annotations based on evolutionary models"/>
</dbReference>
<dbReference type="PhylomeDB" id="Q9UBK5"/>
<dbReference type="TreeFam" id="TF338335"/>
<dbReference type="PathwayCommons" id="Q9UBK5"/>
<dbReference type="Reactome" id="R-HSA-198933">
    <property type="pathway name" value="Immunoregulatory interactions between a Lymphoid and a non-Lymphoid cell"/>
</dbReference>
<dbReference type="SignaLink" id="Q9UBK5"/>
<dbReference type="BioGRID-ORCS" id="10870">
    <property type="hits" value="14 hits in 1141 CRISPR screens"/>
</dbReference>
<dbReference type="ChiTaRS" id="HCST">
    <property type="organism name" value="human"/>
</dbReference>
<dbReference type="GeneWiki" id="HCST_(gene)"/>
<dbReference type="GenomeRNAi" id="10870"/>
<dbReference type="Pharos" id="Q9UBK5">
    <property type="development level" value="Tbio"/>
</dbReference>
<dbReference type="PRO" id="PR:Q9UBK5"/>
<dbReference type="Proteomes" id="UP000005640">
    <property type="component" value="Chromosome 19"/>
</dbReference>
<dbReference type="RNAct" id="Q9UBK5">
    <property type="molecule type" value="protein"/>
</dbReference>
<dbReference type="Bgee" id="ENSG00000126264">
    <property type="expression patterns" value="Expressed in granulocyte and 155 other cell types or tissues"/>
</dbReference>
<dbReference type="GO" id="GO:0009986">
    <property type="term" value="C:cell surface"/>
    <property type="evidence" value="ECO:0000314"/>
    <property type="project" value="UniProtKB"/>
</dbReference>
<dbReference type="GO" id="GO:0005886">
    <property type="term" value="C:plasma membrane"/>
    <property type="evidence" value="ECO:0000314"/>
    <property type="project" value="UniProt"/>
</dbReference>
<dbReference type="GO" id="GO:0043548">
    <property type="term" value="F:phosphatidylinositol 3-kinase binding"/>
    <property type="evidence" value="ECO:0000314"/>
    <property type="project" value="UniProtKB"/>
</dbReference>
<dbReference type="GO" id="GO:0030674">
    <property type="term" value="F:protein-macromolecule adaptor activity"/>
    <property type="evidence" value="ECO:0000314"/>
    <property type="project" value="UniProt"/>
</dbReference>
<dbReference type="GO" id="GO:0005102">
    <property type="term" value="F:signaling receptor binding"/>
    <property type="evidence" value="ECO:0000353"/>
    <property type="project" value="UniProtKB"/>
</dbReference>
<dbReference type="GO" id="GO:0042267">
    <property type="term" value="P:natural killer cell mediated cytotoxicity"/>
    <property type="evidence" value="ECO:0000314"/>
    <property type="project" value="UniProt"/>
</dbReference>
<dbReference type="GO" id="GO:0051897">
    <property type="term" value="P:positive regulation of phosphatidylinositol 3-kinase/protein kinase B signal transduction"/>
    <property type="evidence" value="ECO:0000314"/>
    <property type="project" value="UniProtKB"/>
</dbReference>
<dbReference type="GO" id="GO:0006468">
    <property type="term" value="P:protein phosphorylation"/>
    <property type="evidence" value="ECO:0000316"/>
    <property type="project" value="CACAO"/>
</dbReference>
<dbReference type="GO" id="GO:0050776">
    <property type="term" value="P:regulation of immune response"/>
    <property type="evidence" value="ECO:0007669"/>
    <property type="project" value="InterPro"/>
</dbReference>
<dbReference type="InterPro" id="IPR009861">
    <property type="entry name" value="HCST"/>
</dbReference>
<dbReference type="PANTHER" id="PTHR21409">
    <property type="entry name" value="HEMATOPOIETIC CELL SIGNAL TRANSDUCER"/>
    <property type="match status" value="1"/>
</dbReference>
<dbReference type="PANTHER" id="PTHR21409:SF1">
    <property type="entry name" value="HEMATOPOIETIC CELL SIGNAL TRANSDUCER"/>
    <property type="match status" value="1"/>
</dbReference>
<dbReference type="Pfam" id="PF07213">
    <property type="entry name" value="DAP10"/>
    <property type="match status" value="2"/>
</dbReference>